<keyword id="KW-0051">Antiviral defense</keyword>
<keyword id="KW-0997">Cell inner membrane</keyword>
<keyword id="KW-1003">Cell membrane</keyword>
<keyword id="KW-0472">Membrane</keyword>
<keyword id="KW-0547">Nucleotide-binding</keyword>
<keyword id="KW-1185">Reference proteome</keyword>
<keyword id="KW-0812">Transmembrane</keyword>
<keyword id="KW-1133">Transmembrane helix</keyword>
<feature type="chain" id="PRO_0000455240" description="Pycsar effector protein TpPycTM">
    <location>
        <begin position="1"/>
        <end position="115"/>
    </location>
</feature>
<feature type="transmembrane region" description="Helical" evidence="1">
    <location>
        <begin position="44"/>
        <end position="64"/>
    </location>
</feature>
<feature type="transmembrane region" description="Helical" evidence="1">
    <location>
        <begin position="74"/>
        <end position="94"/>
    </location>
</feature>
<accession>A0A1T4LJG1</accession>
<protein>
    <recommendedName>
        <fullName>Pycsar effector protein TpPycTM</fullName>
        <shortName evidence="2">TpPycTM</shortName>
    </recommendedName>
</protein>
<organism>
    <name type="scientific">Treponema porcinum</name>
    <dbReference type="NCBI Taxonomy" id="261392"/>
    <lineage>
        <taxon>Bacteria</taxon>
        <taxon>Pseudomonadati</taxon>
        <taxon>Spirochaetota</taxon>
        <taxon>Spirochaetia</taxon>
        <taxon>Spirochaetales</taxon>
        <taxon>Treponemataceae</taxon>
        <taxon>Treponema</taxon>
    </lineage>
</organism>
<name>PCTM_TREPO</name>
<dbReference type="EMBL" id="FUWG01000011">
    <property type="protein sequence ID" value="SJZ54756.1"/>
    <property type="molecule type" value="Genomic_DNA"/>
</dbReference>
<dbReference type="SMR" id="A0A1T4LJG1"/>
<dbReference type="STRING" id="261392.SAMN02745149_01625"/>
<dbReference type="Proteomes" id="UP000190423">
    <property type="component" value="Unassembled WGS sequence"/>
</dbReference>
<dbReference type="GO" id="GO:0005886">
    <property type="term" value="C:plasma membrane"/>
    <property type="evidence" value="ECO:0007669"/>
    <property type="project" value="UniProtKB-SubCell"/>
</dbReference>
<dbReference type="GO" id="GO:0000166">
    <property type="term" value="F:nucleotide binding"/>
    <property type="evidence" value="ECO:0007669"/>
    <property type="project" value="UniProtKB-KW"/>
</dbReference>
<dbReference type="GO" id="GO:0051607">
    <property type="term" value="P:defense response to virus"/>
    <property type="evidence" value="ECO:0007669"/>
    <property type="project" value="UniProtKB-KW"/>
</dbReference>
<evidence type="ECO:0000255" key="1"/>
<evidence type="ECO:0000303" key="2">
    <source>
    </source>
</evidence>
<evidence type="ECO:0000303" key="3">
    <source ref="1"/>
</evidence>
<evidence type="ECO:0000305" key="4"/>
<evidence type="ECO:0000305" key="5">
    <source>
    </source>
</evidence>
<comment type="function">
    <text evidence="5">Pycsar (pyrimidine cyclase system for antiphage resistance) provides immunity against bacteriophage. The pyrimidine cyclase (PycC) synthesizes cyclic nucleotides in response to infection; these serve as specific second messenger signals. The signals activate the adjacent effector, leading to bacterial cell death and abortive phage infection. A clade C Pycsar system.</text>
</comment>
<comment type="function">
    <text evidence="5">The effector gene of a two-gene Pycsar system. Expression of this and adjacent uridylate cyclase TpPycC (AC A0A1T4LJ54) probably confers resistance to bacteriophage. The genes are probably only expressed in response to bacteriophage infection. Probably only responds to cUMP (produced by its cognate NTP cyclase), acts by impairing membrane integrity.</text>
</comment>
<comment type="subcellular location">
    <subcellularLocation>
        <location evidence="4">Cell inner membrane</location>
        <topology evidence="1">Multi-pass membrane protein</topology>
    </subcellularLocation>
</comment>
<gene>
    <name evidence="2" type="primary">pycTM</name>
    <name evidence="3" type="ORF">SAMN02745149_01625</name>
</gene>
<reference key="1">
    <citation type="submission" date="2017-02" db="EMBL/GenBank/DDBJ databases">
        <authorList>
            <person name="Varghese N."/>
        </authorList>
    </citation>
    <scope>NUCLEOTIDE SEQUENCE [LARGE SCALE GENOMIC DNA]</scope>
    <source>
        <strain>ATCC BAA-908 / CIP 108245 / JCM 2342 / 14V28</strain>
    </source>
</reference>
<reference key="2">
    <citation type="journal article" date="2021" name="Cell">
        <title>Cyclic CMP and cyclic UMP mediate bacterial immunity against phages.</title>
        <authorList>
            <person name="Tal N."/>
            <person name="Morehouse B.R."/>
            <person name="Millman A."/>
            <person name="Stokar-Avihail A."/>
            <person name="Avraham C."/>
            <person name="Fedorenko T."/>
            <person name="Yirmiya E."/>
            <person name="Herbst E."/>
            <person name="Brandis A."/>
            <person name="Mehlman T."/>
            <person name="Oppenheimer-Shaanan Y."/>
            <person name="Keszei A.F.A."/>
            <person name="Shao S."/>
            <person name="Amitai G."/>
            <person name="Kranzusch P.J."/>
            <person name="Sorek R."/>
        </authorList>
    </citation>
    <scope>FUNCTION</scope>
    <scope>CLASSIFICATION</scope>
    <source>
        <strain>ATCC BAA-908 / CIP 108245 / JCM 2342 / 14V28</strain>
    </source>
</reference>
<sequence length="115" mass="12981">MIGLTKVCWTMSKKEVVDNSIKIEYLRSSFDNVQSLIQFADQKIGNLLLIDTITVGIFITYATNYELSLKDLTVWNILLFITGLIFTVSSVILVYKSIIKVVCSAQSELGLFYKS</sequence>
<proteinExistence type="inferred from homology"/>